<gene>
    <name evidence="1" type="primary">glyS</name>
    <name type="ordered locus">SPy_1688</name>
    <name type="ordered locus">M5005_Spy1384</name>
</gene>
<name>SYGB_STRP1</name>
<organism>
    <name type="scientific">Streptococcus pyogenes serotype M1</name>
    <dbReference type="NCBI Taxonomy" id="301447"/>
    <lineage>
        <taxon>Bacteria</taxon>
        <taxon>Bacillati</taxon>
        <taxon>Bacillota</taxon>
        <taxon>Bacilli</taxon>
        <taxon>Lactobacillales</taxon>
        <taxon>Streptococcaceae</taxon>
        <taxon>Streptococcus</taxon>
    </lineage>
</organism>
<dbReference type="EC" id="6.1.1.14" evidence="1"/>
<dbReference type="EMBL" id="AE004092">
    <property type="protein sequence ID" value="AAK34443.1"/>
    <property type="molecule type" value="Genomic_DNA"/>
</dbReference>
<dbReference type="EMBL" id="CP000017">
    <property type="protein sequence ID" value="AAZ52002.1"/>
    <property type="molecule type" value="Genomic_DNA"/>
</dbReference>
<dbReference type="RefSeq" id="NP_269722.1">
    <property type="nucleotide sequence ID" value="NC_002737.2"/>
</dbReference>
<dbReference type="SMR" id="Q99YI4"/>
<dbReference type="PaxDb" id="1314-HKU360_01436"/>
<dbReference type="KEGG" id="spy:SPy_1688"/>
<dbReference type="KEGG" id="spz:M5005_Spy1384"/>
<dbReference type="PATRIC" id="fig|160490.10.peg.1469"/>
<dbReference type="HOGENOM" id="CLU_007220_2_2_9"/>
<dbReference type="OMA" id="LPIPKRM"/>
<dbReference type="Proteomes" id="UP000000750">
    <property type="component" value="Chromosome"/>
</dbReference>
<dbReference type="GO" id="GO:0005829">
    <property type="term" value="C:cytosol"/>
    <property type="evidence" value="ECO:0007669"/>
    <property type="project" value="TreeGrafter"/>
</dbReference>
<dbReference type="GO" id="GO:0005524">
    <property type="term" value="F:ATP binding"/>
    <property type="evidence" value="ECO:0007669"/>
    <property type="project" value="UniProtKB-UniRule"/>
</dbReference>
<dbReference type="GO" id="GO:0004820">
    <property type="term" value="F:glycine-tRNA ligase activity"/>
    <property type="evidence" value="ECO:0007669"/>
    <property type="project" value="UniProtKB-UniRule"/>
</dbReference>
<dbReference type="GO" id="GO:0006426">
    <property type="term" value="P:glycyl-tRNA aminoacylation"/>
    <property type="evidence" value="ECO:0007669"/>
    <property type="project" value="UniProtKB-UniRule"/>
</dbReference>
<dbReference type="HAMAP" id="MF_00255">
    <property type="entry name" value="Gly_tRNA_synth_beta"/>
    <property type="match status" value="1"/>
</dbReference>
<dbReference type="InterPro" id="IPR015944">
    <property type="entry name" value="Gly-tRNA-synth_bsu"/>
</dbReference>
<dbReference type="InterPro" id="IPR006194">
    <property type="entry name" value="Gly-tRNA-synth_heterodimer"/>
</dbReference>
<dbReference type="NCBIfam" id="TIGR00211">
    <property type="entry name" value="glyS"/>
    <property type="match status" value="1"/>
</dbReference>
<dbReference type="PANTHER" id="PTHR30075:SF2">
    <property type="entry name" value="GLYCINE--TRNA LIGASE, CHLOROPLASTIC_MITOCHONDRIAL 2"/>
    <property type="match status" value="1"/>
</dbReference>
<dbReference type="PANTHER" id="PTHR30075">
    <property type="entry name" value="GLYCYL-TRNA SYNTHETASE"/>
    <property type="match status" value="1"/>
</dbReference>
<dbReference type="Pfam" id="PF02092">
    <property type="entry name" value="tRNA_synt_2f"/>
    <property type="match status" value="1"/>
</dbReference>
<dbReference type="PRINTS" id="PR01045">
    <property type="entry name" value="TRNASYNTHGB"/>
</dbReference>
<dbReference type="SUPFAM" id="SSF109604">
    <property type="entry name" value="HD-domain/PDEase-like"/>
    <property type="match status" value="1"/>
</dbReference>
<dbReference type="PROSITE" id="PS50861">
    <property type="entry name" value="AA_TRNA_LIGASE_II_GLYAB"/>
    <property type="match status" value="1"/>
</dbReference>
<proteinExistence type="inferred from homology"/>
<protein>
    <recommendedName>
        <fullName evidence="1">Glycine--tRNA ligase beta subunit</fullName>
        <ecNumber evidence="1">6.1.1.14</ecNumber>
    </recommendedName>
    <alternativeName>
        <fullName evidence="1">Glycyl-tRNA synthetase beta subunit</fullName>
        <shortName evidence="1">GlyRS</shortName>
    </alternativeName>
</protein>
<sequence length="679" mass="74930">MSKNLLIELGLEELPAYVVTPSEKQLGERLATFLTENRLSFEDIQTFSTPRRLAVRVSGLADQQTDLTEDFKGPAKKIALDADGNFSKAAQGFVRGKGLTTDAIEFREVKGEEYVYVTKHEAGKPAKEVLLGVTEVLSAMTFPVSMHWANNSFEYIRPVHTLTVLLNDEALELDFLDIHSGRVSRGHRFLGTETTITSADSYEADLRSQFVIADAKERQEMIVEQIKTLEVEQGVQVDIDEDLLNEVLNLVEFPTAFMGSFEAKYLDVPEEVLVTSMKNHQRYFVVRDQAGHLMPNFVSVRNGNDQAIENVIKGNEKVLVARLEDGEFFWREDQKLQIADLVAKLTNVTFHEKIGSLAEHMDRTRVIAASLAKEANLSAEEVTAVDRAAQIYKFDLLTGMVGEFDELQGIMGEKYALLAGEDAAVATAIREHYLPDAAGGALPETKVGAVLALAAKLDTLLSFFSVGLIPSGSNDPYALRRATQGIVRILDHFGWRIPMDKLVDSLYDLSFDSLTYANKADVMNFIRARVDKMMGKAAPKDIREAILASSTFVVPEMLAAAEALVKASHTENYKPAVESLSRAFNLAEKADASVQVDPSLFENEQENTLFAAIQGLTLAGSAAQQLEQVFALSPVINDFFDNTMVMAGDQALKNNRLAILSDLVSKAKTIVAFNQLNTK</sequence>
<reference key="1">
    <citation type="journal article" date="2001" name="Proc. Natl. Acad. Sci. U.S.A.">
        <title>Complete genome sequence of an M1 strain of Streptococcus pyogenes.</title>
        <authorList>
            <person name="Ferretti J.J."/>
            <person name="McShan W.M."/>
            <person name="Ajdic D.J."/>
            <person name="Savic D.J."/>
            <person name="Savic G."/>
            <person name="Lyon K."/>
            <person name="Primeaux C."/>
            <person name="Sezate S."/>
            <person name="Suvorov A.N."/>
            <person name="Kenton S."/>
            <person name="Lai H.S."/>
            <person name="Lin S.P."/>
            <person name="Qian Y."/>
            <person name="Jia H.G."/>
            <person name="Najar F.Z."/>
            <person name="Ren Q."/>
            <person name="Zhu H."/>
            <person name="Song L."/>
            <person name="White J."/>
            <person name="Yuan X."/>
            <person name="Clifton S.W."/>
            <person name="Roe B.A."/>
            <person name="McLaughlin R.E."/>
        </authorList>
    </citation>
    <scope>NUCLEOTIDE SEQUENCE [LARGE SCALE GENOMIC DNA]</scope>
    <source>
        <strain>ATCC 700294 / SF370 / Serotype M1</strain>
    </source>
</reference>
<reference key="2">
    <citation type="journal article" date="2005" name="J. Infect. Dis.">
        <title>Evolutionary origin and emergence of a highly successful clone of serotype M1 group A Streptococcus involved multiple horizontal gene transfer events.</title>
        <authorList>
            <person name="Sumby P."/>
            <person name="Porcella S.F."/>
            <person name="Madrigal A.G."/>
            <person name="Barbian K.D."/>
            <person name="Virtaneva K."/>
            <person name="Ricklefs S.M."/>
            <person name="Sturdevant D.E."/>
            <person name="Graham M.R."/>
            <person name="Vuopio-Varkila J."/>
            <person name="Hoe N.P."/>
            <person name="Musser J.M."/>
        </authorList>
    </citation>
    <scope>NUCLEOTIDE SEQUENCE [LARGE SCALE GENOMIC DNA]</scope>
    <source>
        <strain>ATCC BAA-947 / MGAS5005 / Serotype M1</strain>
    </source>
</reference>
<keyword id="KW-0030">Aminoacyl-tRNA synthetase</keyword>
<keyword id="KW-0067">ATP-binding</keyword>
<keyword id="KW-0963">Cytoplasm</keyword>
<keyword id="KW-0436">Ligase</keyword>
<keyword id="KW-0547">Nucleotide-binding</keyword>
<keyword id="KW-0648">Protein biosynthesis</keyword>
<keyword id="KW-1185">Reference proteome</keyword>
<accession>Q99YI4</accession>
<accession>Q48XC3</accession>
<evidence type="ECO:0000255" key="1">
    <source>
        <dbReference type="HAMAP-Rule" id="MF_00255"/>
    </source>
</evidence>
<comment type="catalytic activity">
    <reaction evidence="1">
        <text>tRNA(Gly) + glycine + ATP = glycyl-tRNA(Gly) + AMP + diphosphate</text>
        <dbReference type="Rhea" id="RHEA:16013"/>
        <dbReference type="Rhea" id="RHEA-COMP:9664"/>
        <dbReference type="Rhea" id="RHEA-COMP:9683"/>
        <dbReference type="ChEBI" id="CHEBI:30616"/>
        <dbReference type="ChEBI" id="CHEBI:33019"/>
        <dbReference type="ChEBI" id="CHEBI:57305"/>
        <dbReference type="ChEBI" id="CHEBI:78442"/>
        <dbReference type="ChEBI" id="CHEBI:78522"/>
        <dbReference type="ChEBI" id="CHEBI:456215"/>
        <dbReference type="EC" id="6.1.1.14"/>
    </reaction>
</comment>
<comment type="subunit">
    <text evidence="1">Tetramer of two alpha and two beta subunits.</text>
</comment>
<comment type="subcellular location">
    <subcellularLocation>
        <location evidence="1">Cytoplasm</location>
    </subcellularLocation>
</comment>
<comment type="similarity">
    <text evidence="1">Belongs to the class-II aminoacyl-tRNA synthetase family.</text>
</comment>
<feature type="chain" id="PRO_0000072929" description="Glycine--tRNA ligase beta subunit">
    <location>
        <begin position="1"/>
        <end position="679"/>
    </location>
</feature>